<name>STMP1_HUMAN</name>
<dbReference type="EMBL" id="AC091736">
    <property type="status" value="NOT_ANNOTATED_CDS"/>
    <property type="molecule type" value="Genomic_DNA"/>
</dbReference>
<dbReference type="EMBL" id="AC093107">
    <property type="status" value="NOT_ANNOTATED_CDS"/>
    <property type="molecule type" value="Genomic_DNA"/>
</dbReference>
<dbReference type="CCDS" id="CCDS55168.1"/>
<dbReference type="RefSeq" id="NP_001124401.1">
    <property type="nucleotide sequence ID" value="NM_001130929.2"/>
</dbReference>
<dbReference type="SMR" id="E0CX11"/>
<dbReference type="BioGRID" id="571873">
    <property type="interactions" value="2"/>
</dbReference>
<dbReference type="FunCoup" id="E0CX11">
    <property type="interactions" value="150"/>
</dbReference>
<dbReference type="IntAct" id="E0CX11">
    <property type="interactions" value="2"/>
</dbReference>
<dbReference type="STRING" id="9606.ENSP00000425996"/>
<dbReference type="PhosphoSitePlus" id="E0CX11"/>
<dbReference type="BioMuta" id="STMP1"/>
<dbReference type="jPOST" id="E0CX11"/>
<dbReference type="MassIVE" id="E0CX11"/>
<dbReference type="PaxDb" id="9606-ENSP00000425996"/>
<dbReference type="PeptideAtlas" id="E0CX11"/>
<dbReference type="ProteomicsDB" id="15190"/>
<dbReference type="TopDownProteomics" id="E0CX11"/>
<dbReference type="Antibodypedia" id="77172">
    <property type="antibodies" value="4 antibodies from 4 providers"/>
</dbReference>
<dbReference type="DNASU" id="647087"/>
<dbReference type="Ensembl" id="ENST00000507606.3">
    <property type="protein sequence ID" value="ENSP00000425996.1"/>
    <property type="gene ID" value="ENSG00000243317.8"/>
</dbReference>
<dbReference type="GeneID" id="647087"/>
<dbReference type="KEGG" id="hsa:647087"/>
<dbReference type="MANE-Select" id="ENST00000507606.3">
    <property type="protein sequence ID" value="ENSP00000425996.1"/>
    <property type="RefSeq nucleotide sequence ID" value="NM_001130929.2"/>
    <property type="RefSeq protein sequence ID" value="NP_001124401.1"/>
</dbReference>
<dbReference type="UCSC" id="uc003vsy.4">
    <property type="organism name" value="human"/>
</dbReference>
<dbReference type="AGR" id="HGNC:41909"/>
<dbReference type="CTD" id="647087"/>
<dbReference type="DisGeNET" id="647087"/>
<dbReference type="GeneCards" id="STMP1"/>
<dbReference type="HGNC" id="HGNC:41909">
    <property type="gene designation" value="STMP1"/>
</dbReference>
<dbReference type="HPA" id="ENSG00000243317">
    <property type="expression patterns" value="Low tissue specificity"/>
</dbReference>
<dbReference type="MIM" id="618755">
    <property type="type" value="gene"/>
</dbReference>
<dbReference type="neXtProt" id="NX_E0CX11"/>
<dbReference type="OpenTargets" id="ENSG00000243317"/>
<dbReference type="VEuPathDB" id="HostDB:ENSG00000243317"/>
<dbReference type="eggNOG" id="ENOG502S7PN">
    <property type="taxonomic scope" value="Eukaryota"/>
</dbReference>
<dbReference type="GeneTree" id="ENSGT00550000076278"/>
<dbReference type="HOGENOM" id="CLU_3177783_0_0_1"/>
<dbReference type="InParanoid" id="E0CX11"/>
<dbReference type="OrthoDB" id="2012160at2759"/>
<dbReference type="PAN-GO" id="E0CX11">
    <property type="GO annotations" value="1 GO annotation based on evolutionary models"/>
</dbReference>
<dbReference type="PhylomeDB" id="E0CX11"/>
<dbReference type="PathwayCommons" id="E0CX11"/>
<dbReference type="SignaLink" id="E0CX11"/>
<dbReference type="BioGRID-ORCS" id="647087">
    <property type="hits" value="9 hits in 775 CRISPR screens"/>
</dbReference>
<dbReference type="ChiTaRS" id="C7orf73">
    <property type="organism name" value="human"/>
</dbReference>
<dbReference type="GenomeRNAi" id="647087"/>
<dbReference type="Pharos" id="E0CX11">
    <property type="development level" value="Tdark"/>
</dbReference>
<dbReference type="PRO" id="PR:E0CX11"/>
<dbReference type="Proteomes" id="UP000005640">
    <property type="component" value="Chromosome 7"/>
</dbReference>
<dbReference type="Bgee" id="ENSG00000243317">
    <property type="expression patterns" value="Expressed in pancreatic ductal cell and 192 other cell types or tissues"/>
</dbReference>
<dbReference type="ExpressionAtlas" id="E0CX11">
    <property type="expression patterns" value="baseline and differential"/>
</dbReference>
<dbReference type="GO" id="GO:0005743">
    <property type="term" value="C:mitochondrial inner membrane"/>
    <property type="evidence" value="ECO:0000314"/>
    <property type="project" value="UniProtKB"/>
</dbReference>
<dbReference type="GO" id="GO:0005758">
    <property type="term" value="C:mitochondrial intermembrane space"/>
    <property type="evidence" value="ECO:0000250"/>
    <property type="project" value="UniProtKB"/>
</dbReference>
<dbReference type="GO" id="GO:0005741">
    <property type="term" value="C:mitochondrial outer membrane"/>
    <property type="evidence" value="ECO:0000250"/>
    <property type="project" value="UniProtKB"/>
</dbReference>
<dbReference type="GO" id="GO:0005739">
    <property type="term" value="C:mitochondrion"/>
    <property type="evidence" value="ECO:0006056"/>
    <property type="project" value="FlyBase"/>
</dbReference>
<dbReference type="GO" id="GO:0098803">
    <property type="term" value="C:respiratory chain complex"/>
    <property type="evidence" value="ECO:0000318"/>
    <property type="project" value="GO_Central"/>
</dbReference>
<dbReference type="GO" id="GO:0045087">
    <property type="term" value="P:innate immune response"/>
    <property type="evidence" value="ECO:0007669"/>
    <property type="project" value="UniProtKB-KW"/>
</dbReference>
<dbReference type="GO" id="GO:0033617">
    <property type="term" value="P:mitochondrial cytochrome c oxidase assembly"/>
    <property type="evidence" value="ECO:0000315"/>
    <property type="project" value="UniProtKB"/>
</dbReference>
<dbReference type="GO" id="GO:0097250">
    <property type="term" value="P:mitochondrial respirasome assembly"/>
    <property type="evidence" value="ECO:0000315"/>
    <property type="project" value="UniProtKB"/>
</dbReference>
<dbReference type="GO" id="GO:0034551">
    <property type="term" value="P:mitochondrial respiratory chain complex III assembly"/>
    <property type="evidence" value="ECO:0000250"/>
    <property type="project" value="UniProtKB"/>
</dbReference>
<dbReference type="GO" id="GO:0032731">
    <property type="term" value="P:positive regulation of interleukin-1 beta production"/>
    <property type="evidence" value="ECO:0000250"/>
    <property type="project" value="UniProtKB"/>
</dbReference>
<dbReference type="GO" id="GO:1900227">
    <property type="term" value="P:positive regulation of NLRP3 inflammasome complex assembly"/>
    <property type="evidence" value="ECO:0000250"/>
    <property type="project" value="UniProtKB"/>
</dbReference>
<dbReference type="InterPro" id="IPR027854">
    <property type="entry name" value="STMP1"/>
</dbReference>
<dbReference type="PANTHER" id="PTHR47709">
    <property type="entry name" value="SHORT TRANSMEMBRANE MITOCHONDRIAL PROTEIN 1"/>
    <property type="match status" value="1"/>
</dbReference>
<dbReference type="PANTHER" id="PTHR47709:SF2">
    <property type="entry name" value="SHORT TRANSMEMBRANE MITOCHONDRIAL PROTEIN 1"/>
    <property type="match status" value="1"/>
</dbReference>
<dbReference type="Pfam" id="PF15054">
    <property type="entry name" value="DUF4535"/>
    <property type="match status" value="1"/>
</dbReference>
<gene>
    <name evidence="5 7" type="primary">STMP1</name>
    <name evidence="7" type="synonym">C7orf73</name>
</gene>
<evidence type="ECO:0000250" key="1">
    <source>
        <dbReference type="UniProtKB" id="P0DP99"/>
    </source>
</evidence>
<evidence type="ECO:0000255" key="2"/>
<evidence type="ECO:0000269" key="3">
    <source>
    </source>
</evidence>
<evidence type="ECO:0000269" key="4">
    <source>
    </source>
</evidence>
<evidence type="ECO:0000303" key="5">
    <source>
    </source>
</evidence>
<evidence type="ECO:0000305" key="6"/>
<evidence type="ECO:0000312" key="7">
    <source>
        <dbReference type="HGNC" id="HGNC:41909"/>
    </source>
</evidence>
<protein>
    <recommendedName>
        <fullName evidence="5">Short transmembrane mitochondrial protein 1</fullName>
    </recommendedName>
</protein>
<proteinExistence type="evidence at protein level"/>
<accession>E0CX11</accession>
<reference key="1">
    <citation type="journal article" date="2003" name="Nature">
        <title>The DNA sequence of human chromosome 7.</title>
        <authorList>
            <person name="Hillier L.W."/>
            <person name="Fulton R.S."/>
            <person name="Fulton L.A."/>
            <person name="Graves T.A."/>
            <person name="Pepin K.H."/>
            <person name="Wagner-McPherson C."/>
            <person name="Layman D."/>
            <person name="Maas J."/>
            <person name="Jaeger S."/>
            <person name="Walker R."/>
            <person name="Wylie K."/>
            <person name="Sekhon M."/>
            <person name="Becker M.C."/>
            <person name="O'Laughlin M.D."/>
            <person name="Schaller M.E."/>
            <person name="Fewell G.A."/>
            <person name="Delehaunty K.D."/>
            <person name="Miner T.L."/>
            <person name="Nash W.E."/>
            <person name="Cordes M."/>
            <person name="Du H."/>
            <person name="Sun H."/>
            <person name="Edwards J."/>
            <person name="Bradshaw-Cordum H."/>
            <person name="Ali J."/>
            <person name="Andrews S."/>
            <person name="Isak A."/>
            <person name="Vanbrunt A."/>
            <person name="Nguyen C."/>
            <person name="Du F."/>
            <person name="Lamar B."/>
            <person name="Courtney L."/>
            <person name="Kalicki J."/>
            <person name="Ozersky P."/>
            <person name="Bielicki L."/>
            <person name="Scott K."/>
            <person name="Holmes A."/>
            <person name="Harkins R."/>
            <person name="Harris A."/>
            <person name="Strong C.M."/>
            <person name="Hou S."/>
            <person name="Tomlinson C."/>
            <person name="Dauphin-Kohlberg S."/>
            <person name="Kozlowicz-Reilly A."/>
            <person name="Leonard S."/>
            <person name="Rohlfing T."/>
            <person name="Rock S.M."/>
            <person name="Tin-Wollam A.-M."/>
            <person name="Abbott A."/>
            <person name="Minx P."/>
            <person name="Maupin R."/>
            <person name="Strowmatt C."/>
            <person name="Latreille P."/>
            <person name="Miller N."/>
            <person name="Johnson D."/>
            <person name="Murray J."/>
            <person name="Woessner J.P."/>
            <person name="Wendl M.C."/>
            <person name="Yang S.-P."/>
            <person name="Schultz B.R."/>
            <person name="Wallis J.W."/>
            <person name="Spieth J."/>
            <person name="Bieri T.A."/>
            <person name="Nelson J.O."/>
            <person name="Berkowicz N."/>
            <person name="Wohldmann P.E."/>
            <person name="Cook L.L."/>
            <person name="Hickenbotham M.T."/>
            <person name="Eldred J."/>
            <person name="Williams D."/>
            <person name="Bedell J.A."/>
            <person name="Mardis E.R."/>
            <person name="Clifton S.W."/>
            <person name="Chissoe S.L."/>
            <person name="Marra M.A."/>
            <person name="Raymond C."/>
            <person name="Haugen E."/>
            <person name="Gillett W."/>
            <person name="Zhou Y."/>
            <person name="James R."/>
            <person name="Phelps K."/>
            <person name="Iadanoto S."/>
            <person name="Bubb K."/>
            <person name="Simms E."/>
            <person name="Levy R."/>
            <person name="Clendenning J."/>
            <person name="Kaul R."/>
            <person name="Kent W.J."/>
            <person name="Furey T.S."/>
            <person name="Baertsch R.A."/>
            <person name="Brent M.R."/>
            <person name="Keibler E."/>
            <person name="Flicek P."/>
            <person name="Bork P."/>
            <person name="Suyama M."/>
            <person name="Bailey J.A."/>
            <person name="Portnoy M.E."/>
            <person name="Torrents D."/>
            <person name="Chinwalla A.T."/>
            <person name="Gish W.R."/>
            <person name="Eddy S.R."/>
            <person name="McPherson J.D."/>
            <person name="Olson M.V."/>
            <person name="Eichler E.E."/>
            <person name="Green E.D."/>
            <person name="Waterston R.H."/>
            <person name="Wilson R.K."/>
        </authorList>
    </citation>
    <scope>NUCLEOTIDE SEQUENCE [LARGE SCALE GENOMIC DNA]</scope>
</reference>
<reference key="2">
    <citation type="journal article" date="2012" name="Physiol. Genomics">
        <title>Functional prediction and physiological characterization of a novel short trans-membrane protein 1 as a subunit of mitochondrial respiratory complexes.</title>
        <authorList>
            <person name="Zhang D."/>
            <person name="Xi Y."/>
            <person name="Coccimiglio M.L."/>
            <person name="Mennigen J.A."/>
            <person name="Jonz M.G."/>
            <person name="Ekker M."/>
            <person name="Trudeau V.L."/>
        </authorList>
    </citation>
    <scope>IDENTIFICATION</scope>
</reference>
<reference key="3">
    <citation type="journal article" date="2015" name="Proteomics">
        <title>N-terminome analysis of the human mitochondrial proteome.</title>
        <authorList>
            <person name="Vaca Jacome A.S."/>
            <person name="Rabilloud T."/>
            <person name="Schaeffer-Reiss C."/>
            <person name="Rompais M."/>
            <person name="Ayoub D."/>
            <person name="Lane L."/>
            <person name="Bairoch A."/>
            <person name="Van Dorsselaer A."/>
            <person name="Carapito C."/>
        </authorList>
    </citation>
    <scope>IDENTIFICATION BY MASS SPECTROMETRY [LARGE SCALE ANALYSIS]</scope>
</reference>
<reference key="4">
    <citation type="journal article" date="2020" name="J. Immunol.">
        <title>A Mitochondrial Micropeptide Is Required for Activation of the Nlrp3 Inflammasome.</title>
        <authorList>
            <person name="Bhatta A."/>
            <person name="Atianand M."/>
            <person name="Jiang Z."/>
            <person name="Crabtree J."/>
            <person name="Blin J."/>
            <person name="Fitzgerald K.A."/>
        </authorList>
    </citation>
    <scope>TISSUE SPECIFICITY</scope>
    <scope>INDUCTION BY TLR LIGANDS</scope>
</reference>
<reference key="5">
    <citation type="journal article" date="2022" name="Mol. Ther.">
        <title>Mitochondrial micropeptide STMP1 promotes G1/S transition by enhancing mitochondrial complex IV activity.</title>
        <authorList>
            <person name="Sang Y."/>
            <person name="Liu J.Y."/>
            <person name="Wang F.Y."/>
            <person name="Luo X.Y."/>
            <person name="Chen Z.Q."/>
            <person name="Zhuang S.M."/>
            <person name="Zhu Y."/>
        </authorList>
    </citation>
    <scope>FUNCTION</scope>
    <scope>SUBCELLULAR LOCATION</scope>
</reference>
<feature type="chain" id="PRO_0000413534" description="Short transmembrane mitochondrial protein 1" evidence="2">
    <location>
        <begin position="1"/>
        <end position="47"/>
    </location>
</feature>
<feature type="transmembrane region" description="Helical" evidence="2">
    <location>
        <begin position="7"/>
        <end position="23"/>
    </location>
</feature>
<keyword id="KW-0391">Immunity</keyword>
<keyword id="KW-0399">Innate immunity</keyword>
<keyword id="KW-0472">Membrane</keyword>
<keyword id="KW-0496">Mitochondrion</keyword>
<keyword id="KW-0999">Mitochondrion inner membrane</keyword>
<keyword id="KW-1000">Mitochondrion outer membrane</keyword>
<keyword id="KW-1267">Proteomics identification</keyword>
<keyword id="KW-1185">Reference proteome</keyword>
<keyword id="KW-0812">Transmembrane</keyword>
<keyword id="KW-1133">Transmembrane helix</keyword>
<organism>
    <name type="scientific">Homo sapiens</name>
    <name type="common">Human</name>
    <dbReference type="NCBI Taxonomy" id="9606"/>
    <lineage>
        <taxon>Eukaryota</taxon>
        <taxon>Metazoa</taxon>
        <taxon>Chordata</taxon>
        <taxon>Craniata</taxon>
        <taxon>Vertebrata</taxon>
        <taxon>Euteleostomi</taxon>
        <taxon>Mammalia</taxon>
        <taxon>Eutheria</taxon>
        <taxon>Euarchontoglires</taxon>
        <taxon>Primates</taxon>
        <taxon>Haplorrhini</taxon>
        <taxon>Catarrhini</taxon>
        <taxon>Hominidae</taxon>
        <taxon>Homo</taxon>
    </lineage>
</organism>
<sequence>MLQFLLGFTLGNVVGMYLAQNYDIPNLAKKLEEIKKDLDAKKKPPSA</sequence>
<comment type="function">
    <text evidence="1 4">Microprotein involved in mitochondrial respiratory chain complex III (ubiquinol-cytochrome c oxidoreductase) and complex IV (mitochondrial cytochrome c oxidase complex) assembly (PubMed:35450818). Required for the formation of mitochondrial supercomplexes (SCs) (PubMed:35450818). Also required for the activation of the NLRP3 inflammasome (By similarity).</text>
</comment>
<comment type="subunit">
    <text evidence="1 4">Interacts with components of the ubiquinol-cytochrome c oxidoreductase (cytochrome b-c1 complex, complex III, CIII), such as UQCRC1/QCR1, UQCRC2/QCR2 and UQCR10/QCR9 (By similarity). Interacts with components of the cytochrome c oxidase (mitochondrial respiratory chain complex IV) complex, such as MT-CO2 (PubMed:35450818).</text>
</comment>
<comment type="interaction">
    <interactant intactId="EBI-18397783">
        <id>E0CX11</id>
    </interactant>
    <interactant intactId="EBI-347996">
        <id>O43765</id>
        <label>SGTA</label>
    </interactant>
    <organismsDiffer>false</organismsDiffer>
    <experiments>3</experiments>
</comment>
<comment type="subcellular location">
    <subcellularLocation>
        <location evidence="4">Mitochondrion inner membrane</location>
        <topology evidence="2">Single-pass membrane protein</topology>
    </subcellularLocation>
    <subcellularLocation>
        <location evidence="1">Mitochondrion outer membrane</location>
        <topology evidence="2">Single-pass membrane protein</topology>
    </subcellularLocation>
    <subcellularLocation>
        <location evidence="1">Mitochondrion intermembrane space</location>
    </subcellularLocation>
</comment>
<comment type="tissue specificity">
    <text evidence="3">Expressed in monocytes and dendritic cells.</text>
</comment>
<comment type="induction">
    <text evidence="3">Down-regulated by bacterial lipopolysaccharide (LPS) in monocytes and dendritic cells.</text>
</comment>
<comment type="similarity">
    <text evidence="6">Belongs to the STMP1 family.</text>
</comment>